<keyword id="KW-0233">DNA recombination</keyword>
<keyword id="KW-0255">Endonuclease</keyword>
<keyword id="KW-0378">Hydrolase</keyword>
<keyword id="KW-0460">Magnesium</keyword>
<keyword id="KW-0540">Nuclease</keyword>
<keyword id="KW-1185">Reference proteome</keyword>
<protein>
    <recommendedName>
        <fullName evidence="1">Recombination-promoting nuclease RpnD</fullName>
        <ecNumber>3.1.21.-</ecNumber>
    </recommendedName>
</protein>
<comment type="function">
    <text evidence="1">A low activity DNA endonuclease probably yielding 3'-hydroxyl ends. Involved in RecA-independent recombination and horizontal gene transfer (By similarity).</text>
</comment>
<comment type="similarity">
    <text evidence="2">Belongs to the Rpn/YhgA-like nuclease family.</text>
</comment>
<gene>
    <name type="primary">rpnD</name>
    <name type="synonym">yjiP</name>
    <name type="ordered locus">Z5940</name>
    <name type="ordered locus">ECs5301</name>
</gene>
<sequence length="260" mass="30489">MTNFTTSTPHDALFKSFLMHPDTARDFMEIHLPKDLRELCDLDSLKLESASFVDEKLRALHSDILWSVKTREGDGYIYVVIEHQSREDIHMAFRLMRYSMAVMQRHIEHDKRRPLPLVIPMLFYHGSRSPYPWSLCWLDEFADPTTARKLYNAAFPLVDITVVPDDEIVQHRRVALLELIQKHIRQRDLMGLIDQLVVLLVTECANDSQITALLNYILLTGDEERFNEFISELTSRMPQHRERIMTIAERIHNDDCRANS</sequence>
<dbReference type="EC" id="3.1.21.-"/>
<dbReference type="EMBL" id="AE005174">
    <property type="protein sequence ID" value="AAG59523.1"/>
    <property type="molecule type" value="Genomic_DNA"/>
</dbReference>
<dbReference type="EMBL" id="BA000007">
    <property type="protein sequence ID" value="BAB38724.1"/>
    <property type="molecule type" value="Genomic_DNA"/>
</dbReference>
<dbReference type="PIR" id="E91291">
    <property type="entry name" value="E91291"/>
</dbReference>
<dbReference type="PIR" id="G86132">
    <property type="entry name" value="G86132"/>
</dbReference>
<dbReference type="RefSeq" id="NP_313328.1">
    <property type="nucleotide sequence ID" value="NC_002695.1"/>
</dbReference>
<dbReference type="RefSeq" id="WP_001303778.1">
    <property type="nucleotide sequence ID" value="NZ_VOAI01000002.1"/>
</dbReference>
<dbReference type="SMR" id="P58245"/>
<dbReference type="STRING" id="155864.Z5940"/>
<dbReference type="GeneID" id="913622"/>
<dbReference type="KEGG" id="ece:Z5940"/>
<dbReference type="KEGG" id="ecs:ECs_5301"/>
<dbReference type="PATRIC" id="fig|386585.9.peg.5543"/>
<dbReference type="eggNOG" id="COG5464">
    <property type="taxonomic scope" value="Bacteria"/>
</dbReference>
<dbReference type="HOGENOM" id="CLU_059548_1_0_6"/>
<dbReference type="Proteomes" id="UP000000558">
    <property type="component" value="Chromosome"/>
</dbReference>
<dbReference type="Proteomes" id="UP000002519">
    <property type="component" value="Chromosome"/>
</dbReference>
<dbReference type="GO" id="GO:1990238">
    <property type="term" value="F:double-stranded DNA endonuclease activity"/>
    <property type="evidence" value="ECO:0007669"/>
    <property type="project" value="TreeGrafter"/>
</dbReference>
<dbReference type="GO" id="GO:0006310">
    <property type="term" value="P:DNA recombination"/>
    <property type="evidence" value="ECO:0007669"/>
    <property type="project" value="UniProtKB-KW"/>
</dbReference>
<dbReference type="InterPro" id="IPR051699">
    <property type="entry name" value="Rpn/YhgA-like_nuclease"/>
</dbReference>
<dbReference type="InterPro" id="IPR010106">
    <property type="entry name" value="RpnA"/>
</dbReference>
<dbReference type="InterPro" id="IPR006842">
    <property type="entry name" value="Transposase_31"/>
</dbReference>
<dbReference type="NCBIfam" id="TIGR01784">
    <property type="entry name" value="T_den_put_tspse"/>
    <property type="match status" value="1"/>
</dbReference>
<dbReference type="PANTHER" id="PTHR34611">
    <property type="match status" value="1"/>
</dbReference>
<dbReference type="PANTHER" id="PTHR34611:SF2">
    <property type="entry name" value="INACTIVE RECOMBINATION-PROMOTING NUCLEASE-LIKE PROTEIN RPNE-RELATED"/>
    <property type="match status" value="1"/>
</dbReference>
<dbReference type="Pfam" id="PF04754">
    <property type="entry name" value="Transposase_31"/>
    <property type="match status" value="1"/>
</dbReference>
<accession>P58245</accession>
<reference key="1">
    <citation type="journal article" date="2001" name="Nature">
        <title>Genome sequence of enterohaemorrhagic Escherichia coli O157:H7.</title>
        <authorList>
            <person name="Perna N.T."/>
            <person name="Plunkett G. III"/>
            <person name="Burland V."/>
            <person name="Mau B."/>
            <person name="Glasner J.D."/>
            <person name="Rose D.J."/>
            <person name="Mayhew G.F."/>
            <person name="Evans P.S."/>
            <person name="Gregor J."/>
            <person name="Kirkpatrick H.A."/>
            <person name="Posfai G."/>
            <person name="Hackett J."/>
            <person name="Klink S."/>
            <person name="Boutin A."/>
            <person name="Shao Y."/>
            <person name="Miller L."/>
            <person name="Grotbeck E.J."/>
            <person name="Davis N.W."/>
            <person name="Lim A."/>
            <person name="Dimalanta E.T."/>
            <person name="Potamousis K."/>
            <person name="Apodaca J."/>
            <person name="Anantharaman T.S."/>
            <person name="Lin J."/>
            <person name="Yen G."/>
            <person name="Schwartz D.C."/>
            <person name="Welch R.A."/>
            <person name="Blattner F.R."/>
        </authorList>
    </citation>
    <scope>NUCLEOTIDE SEQUENCE [LARGE SCALE GENOMIC DNA]</scope>
    <source>
        <strain>O157:H7 / EDL933 / ATCC 700927 / EHEC</strain>
    </source>
</reference>
<reference key="2">
    <citation type="journal article" date="2001" name="DNA Res.">
        <title>Complete genome sequence of enterohemorrhagic Escherichia coli O157:H7 and genomic comparison with a laboratory strain K-12.</title>
        <authorList>
            <person name="Hayashi T."/>
            <person name="Makino K."/>
            <person name="Ohnishi M."/>
            <person name="Kurokawa K."/>
            <person name="Ishii K."/>
            <person name="Yokoyama K."/>
            <person name="Han C.-G."/>
            <person name="Ohtsubo E."/>
            <person name="Nakayama K."/>
            <person name="Murata T."/>
            <person name="Tanaka M."/>
            <person name="Tobe T."/>
            <person name="Iida T."/>
            <person name="Takami H."/>
            <person name="Honda T."/>
            <person name="Sasakawa C."/>
            <person name="Ogasawara N."/>
            <person name="Yasunaga T."/>
            <person name="Kuhara S."/>
            <person name="Shiba T."/>
            <person name="Hattori M."/>
            <person name="Shinagawa H."/>
        </authorList>
    </citation>
    <scope>NUCLEOTIDE SEQUENCE [LARGE SCALE GENOMIC DNA]</scope>
    <source>
        <strain>O157:H7 / Sakai / RIMD 0509952 / EHEC</strain>
    </source>
</reference>
<name>RPND_ECO57</name>
<proteinExistence type="inferred from homology"/>
<feature type="chain" id="PRO_0000169795" description="Recombination-promoting nuclease RpnD">
    <location>
        <begin position="1"/>
        <end position="260"/>
    </location>
</feature>
<organism>
    <name type="scientific">Escherichia coli O157:H7</name>
    <dbReference type="NCBI Taxonomy" id="83334"/>
    <lineage>
        <taxon>Bacteria</taxon>
        <taxon>Pseudomonadati</taxon>
        <taxon>Pseudomonadota</taxon>
        <taxon>Gammaproteobacteria</taxon>
        <taxon>Enterobacterales</taxon>
        <taxon>Enterobacteriaceae</taxon>
        <taxon>Escherichia</taxon>
    </lineage>
</organism>
<evidence type="ECO:0000250" key="1">
    <source>
        <dbReference type="UniProtKB" id="P39387"/>
    </source>
</evidence>
<evidence type="ECO:0000305" key="2"/>